<gene>
    <name evidence="1" type="primary">rlmH</name>
    <name type="ordered locus">Abu_0448</name>
</gene>
<name>RLMH_ALIB4</name>
<feature type="chain" id="PRO_0000366560" description="Ribosomal RNA large subunit methyltransferase H">
    <location>
        <begin position="1"/>
        <end position="151"/>
    </location>
</feature>
<feature type="binding site" evidence="1">
    <location>
        <position position="73"/>
    </location>
    <ligand>
        <name>S-adenosyl-L-methionine</name>
        <dbReference type="ChEBI" id="CHEBI:59789"/>
    </ligand>
</feature>
<feature type="binding site" evidence="1">
    <location>
        <position position="100"/>
    </location>
    <ligand>
        <name>S-adenosyl-L-methionine</name>
        <dbReference type="ChEBI" id="CHEBI:59789"/>
    </ligand>
</feature>
<feature type="binding site" evidence="1">
    <location>
        <begin position="119"/>
        <end position="124"/>
    </location>
    <ligand>
        <name>S-adenosyl-L-methionine</name>
        <dbReference type="ChEBI" id="CHEBI:59789"/>
    </ligand>
</feature>
<sequence>MKINIYAILKPTADNFDQIIKEFIKMSSKYAKVEVHYIFNKNIAKAQTIGEKESQLAYSQTYEPLLKGYNIALDVLGKRVDTYAFSSLIDNKNEVNFFIGGAYGFQREFLNKCDSVISLSDLTMAHKVANVVLTEQIFRSLCIQNNHPYHK</sequence>
<evidence type="ECO:0000255" key="1">
    <source>
        <dbReference type="HAMAP-Rule" id="MF_00658"/>
    </source>
</evidence>
<evidence type="ECO:0000305" key="2"/>
<proteinExistence type="inferred from homology"/>
<dbReference type="EC" id="2.1.1.177" evidence="1"/>
<dbReference type="EMBL" id="CP000361">
    <property type="protein sequence ID" value="ABV66723.1"/>
    <property type="status" value="ALT_INIT"/>
    <property type="molecule type" value="Genomic_DNA"/>
</dbReference>
<dbReference type="RefSeq" id="WP_004510514.1">
    <property type="nucleotide sequence ID" value="NC_009850.1"/>
</dbReference>
<dbReference type="SMR" id="A8ERZ9"/>
<dbReference type="STRING" id="367737.Abu_0448"/>
<dbReference type="GeneID" id="24304597"/>
<dbReference type="KEGG" id="abu:Abu_0448"/>
<dbReference type="eggNOG" id="COG1576">
    <property type="taxonomic scope" value="Bacteria"/>
</dbReference>
<dbReference type="HOGENOM" id="CLU_100552_2_1_7"/>
<dbReference type="Proteomes" id="UP000001136">
    <property type="component" value="Chromosome"/>
</dbReference>
<dbReference type="GO" id="GO:0005737">
    <property type="term" value="C:cytoplasm"/>
    <property type="evidence" value="ECO:0007669"/>
    <property type="project" value="UniProtKB-SubCell"/>
</dbReference>
<dbReference type="GO" id="GO:0070038">
    <property type="term" value="F:rRNA (pseudouridine-N3-)-methyltransferase activity"/>
    <property type="evidence" value="ECO:0007669"/>
    <property type="project" value="UniProtKB-UniRule"/>
</dbReference>
<dbReference type="CDD" id="cd18081">
    <property type="entry name" value="RlmH-like"/>
    <property type="match status" value="1"/>
</dbReference>
<dbReference type="Gene3D" id="3.40.1280.10">
    <property type="match status" value="1"/>
</dbReference>
<dbReference type="HAMAP" id="MF_00658">
    <property type="entry name" value="23SrRNA_methyltr_H"/>
    <property type="match status" value="1"/>
</dbReference>
<dbReference type="InterPro" id="IPR029028">
    <property type="entry name" value="Alpha/beta_knot_MTases"/>
</dbReference>
<dbReference type="InterPro" id="IPR003742">
    <property type="entry name" value="RlmH-like"/>
</dbReference>
<dbReference type="InterPro" id="IPR029026">
    <property type="entry name" value="tRNA_m1G_MTases_N"/>
</dbReference>
<dbReference type="PANTHER" id="PTHR33603">
    <property type="entry name" value="METHYLTRANSFERASE"/>
    <property type="match status" value="1"/>
</dbReference>
<dbReference type="PANTHER" id="PTHR33603:SF1">
    <property type="entry name" value="RIBOSOMAL RNA LARGE SUBUNIT METHYLTRANSFERASE H"/>
    <property type="match status" value="1"/>
</dbReference>
<dbReference type="Pfam" id="PF02590">
    <property type="entry name" value="SPOUT_MTase"/>
    <property type="match status" value="1"/>
</dbReference>
<dbReference type="PIRSF" id="PIRSF004505">
    <property type="entry name" value="MT_bac"/>
    <property type="match status" value="1"/>
</dbReference>
<dbReference type="SUPFAM" id="SSF75217">
    <property type="entry name" value="alpha/beta knot"/>
    <property type="match status" value="1"/>
</dbReference>
<reference key="1">
    <citation type="journal article" date="2007" name="PLoS ONE">
        <title>The complete genome sequence and analysis of the Epsilonproteobacterium Arcobacter butzleri.</title>
        <authorList>
            <person name="Miller W.G."/>
            <person name="Parker C.T."/>
            <person name="Rubenfield M."/>
            <person name="Mendz G.L."/>
            <person name="Woesten M.M.S.M."/>
            <person name="Ussery D.W."/>
            <person name="Stolz J.F."/>
            <person name="Binnewies T.T."/>
            <person name="Hallin P.F."/>
            <person name="Wang G."/>
            <person name="Malek J.A."/>
            <person name="Rogosin A."/>
            <person name="Stanker L.H."/>
            <person name="Mandrell R.E."/>
        </authorList>
    </citation>
    <scope>NUCLEOTIDE SEQUENCE [LARGE SCALE GENOMIC DNA]</scope>
    <source>
        <strain>RM4018</strain>
    </source>
</reference>
<accession>A8ERZ9</accession>
<protein>
    <recommendedName>
        <fullName evidence="1">Ribosomal RNA large subunit methyltransferase H</fullName>
        <ecNumber evidence="1">2.1.1.177</ecNumber>
    </recommendedName>
    <alternativeName>
        <fullName evidence="1">23S rRNA (pseudouridine1915-N3)-methyltransferase</fullName>
    </alternativeName>
    <alternativeName>
        <fullName evidence="1">23S rRNA m3Psi1915 methyltransferase</fullName>
    </alternativeName>
    <alternativeName>
        <fullName evidence="1">rRNA (pseudouridine-N3-)-methyltransferase RlmH</fullName>
    </alternativeName>
</protein>
<comment type="function">
    <text evidence="1">Specifically methylates the pseudouridine at position 1915 (m3Psi1915) in 23S rRNA.</text>
</comment>
<comment type="catalytic activity">
    <reaction evidence="1">
        <text>pseudouridine(1915) in 23S rRNA + S-adenosyl-L-methionine = N(3)-methylpseudouridine(1915) in 23S rRNA + S-adenosyl-L-homocysteine + H(+)</text>
        <dbReference type="Rhea" id="RHEA:42752"/>
        <dbReference type="Rhea" id="RHEA-COMP:10221"/>
        <dbReference type="Rhea" id="RHEA-COMP:10222"/>
        <dbReference type="ChEBI" id="CHEBI:15378"/>
        <dbReference type="ChEBI" id="CHEBI:57856"/>
        <dbReference type="ChEBI" id="CHEBI:59789"/>
        <dbReference type="ChEBI" id="CHEBI:65314"/>
        <dbReference type="ChEBI" id="CHEBI:74486"/>
        <dbReference type="EC" id="2.1.1.177"/>
    </reaction>
</comment>
<comment type="subunit">
    <text evidence="1">Homodimer.</text>
</comment>
<comment type="subcellular location">
    <subcellularLocation>
        <location evidence="1">Cytoplasm</location>
    </subcellularLocation>
</comment>
<comment type="similarity">
    <text evidence="1">Belongs to the RNA methyltransferase RlmH family.</text>
</comment>
<comment type="sequence caution" evidence="2">
    <conflict type="erroneous initiation">
        <sequence resource="EMBL-CDS" id="ABV66723"/>
    </conflict>
</comment>
<keyword id="KW-0963">Cytoplasm</keyword>
<keyword id="KW-0489">Methyltransferase</keyword>
<keyword id="KW-1185">Reference proteome</keyword>
<keyword id="KW-0698">rRNA processing</keyword>
<keyword id="KW-0949">S-adenosyl-L-methionine</keyword>
<keyword id="KW-0808">Transferase</keyword>
<organism>
    <name type="scientific">Aliarcobacter butzleri (strain RM4018)</name>
    <name type="common">Arcobacter butzleri</name>
    <dbReference type="NCBI Taxonomy" id="367737"/>
    <lineage>
        <taxon>Bacteria</taxon>
        <taxon>Pseudomonadati</taxon>
        <taxon>Campylobacterota</taxon>
        <taxon>Epsilonproteobacteria</taxon>
        <taxon>Campylobacterales</taxon>
        <taxon>Arcobacteraceae</taxon>
        <taxon>Aliarcobacter</taxon>
    </lineage>
</organism>